<reference key="1">
    <citation type="submission" date="2009-05" db="EMBL/GenBank/DDBJ databases">
        <title>Complete sequence of Tolumonas auensis DSM 9187.</title>
        <authorList>
            <consortium name="US DOE Joint Genome Institute"/>
            <person name="Lucas S."/>
            <person name="Copeland A."/>
            <person name="Lapidus A."/>
            <person name="Glavina del Rio T."/>
            <person name="Tice H."/>
            <person name="Bruce D."/>
            <person name="Goodwin L."/>
            <person name="Pitluck S."/>
            <person name="Chertkov O."/>
            <person name="Brettin T."/>
            <person name="Detter J.C."/>
            <person name="Han C."/>
            <person name="Larimer F."/>
            <person name="Land M."/>
            <person name="Hauser L."/>
            <person name="Kyrpides N."/>
            <person name="Mikhailova N."/>
            <person name="Spring S."/>
            <person name="Beller H."/>
        </authorList>
    </citation>
    <scope>NUCLEOTIDE SEQUENCE [LARGE SCALE GENOMIC DNA]</scope>
    <source>
        <strain>DSM 9187 / NBRC 110442 / TA 4</strain>
    </source>
</reference>
<sequence length="342" mass="36121">MTITLGQLAQHLGAELHGDADVIIQRIANLETAQAGEIGFLSDSKYQQYLATTQASAVLLRAADLAMCQTNALVVKDPYIAFARVAQLLDSTPAPAVNIHPSAVIADDVQLGQGVAVGANAVIETGVVLGDGAIIGAGCFVGKNSKLGARSKLWANVTIYHNVRIGDDCLVQSGTVIGADGFGYANERGEWIKIPQLGGVVIGNRVEIGSNTCIDRGAIDDTRIADNVIIDNLCQIAHNVEIGYGTAIAGAATFAGSTKIGKYCIIGGASVFNGHIEICDQVTVTGMAMVMRSITEPGLYSSGIPAQTNKEWRKTAARTLHIDDMYKRLSNIEKLLDKQEQK</sequence>
<name>LPXD_TOLAT</name>
<proteinExistence type="inferred from homology"/>
<evidence type="ECO:0000255" key="1">
    <source>
        <dbReference type="HAMAP-Rule" id="MF_00523"/>
    </source>
</evidence>
<feature type="chain" id="PRO_1000211755" description="UDP-3-O-acylglucosamine N-acyltransferase">
    <location>
        <begin position="1"/>
        <end position="342"/>
    </location>
</feature>
<feature type="active site" description="Proton acceptor" evidence="1">
    <location>
        <position position="238"/>
    </location>
</feature>
<organism>
    <name type="scientific">Tolumonas auensis (strain DSM 9187 / NBRC 110442 / TA 4)</name>
    <dbReference type="NCBI Taxonomy" id="595494"/>
    <lineage>
        <taxon>Bacteria</taxon>
        <taxon>Pseudomonadati</taxon>
        <taxon>Pseudomonadota</taxon>
        <taxon>Gammaproteobacteria</taxon>
        <taxon>Aeromonadales</taxon>
        <taxon>Aeromonadaceae</taxon>
        <taxon>Tolumonas</taxon>
    </lineage>
</organism>
<comment type="function">
    <text evidence="1">Catalyzes the N-acylation of UDP-3-O-acylglucosamine using 3-hydroxyacyl-ACP as the acyl donor. Is involved in the biosynthesis of lipid A, a phosphorylated glycolipid that anchors the lipopolysaccharide to the outer membrane of the cell.</text>
</comment>
<comment type="catalytic activity">
    <reaction evidence="1">
        <text>a UDP-3-O-[(3R)-3-hydroxyacyl]-alpha-D-glucosamine + a (3R)-hydroxyacyl-[ACP] = a UDP-2-N,3-O-bis[(3R)-3-hydroxyacyl]-alpha-D-glucosamine + holo-[ACP] + H(+)</text>
        <dbReference type="Rhea" id="RHEA:53836"/>
        <dbReference type="Rhea" id="RHEA-COMP:9685"/>
        <dbReference type="Rhea" id="RHEA-COMP:9945"/>
        <dbReference type="ChEBI" id="CHEBI:15378"/>
        <dbReference type="ChEBI" id="CHEBI:64479"/>
        <dbReference type="ChEBI" id="CHEBI:78827"/>
        <dbReference type="ChEBI" id="CHEBI:137740"/>
        <dbReference type="ChEBI" id="CHEBI:137748"/>
        <dbReference type="EC" id="2.3.1.191"/>
    </reaction>
</comment>
<comment type="pathway">
    <text evidence="1">Bacterial outer membrane biogenesis; LPS lipid A biosynthesis.</text>
</comment>
<comment type="subunit">
    <text evidence="1">Homotrimer.</text>
</comment>
<comment type="similarity">
    <text evidence="1">Belongs to the transferase hexapeptide repeat family. LpxD subfamily.</text>
</comment>
<dbReference type="EC" id="2.3.1.191" evidence="1"/>
<dbReference type="EMBL" id="CP001616">
    <property type="protein sequence ID" value="ACQ93700.1"/>
    <property type="molecule type" value="Genomic_DNA"/>
</dbReference>
<dbReference type="RefSeq" id="WP_015879168.1">
    <property type="nucleotide sequence ID" value="NC_012691.1"/>
</dbReference>
<dbReference type="SMR" id="C4L854"/>
<dbReference type="STRING" id="595494.Tola_2101"/>
<dbReference type="KEGG" id="tau:Tola_2101"/>
<dbReference type="eggNOG" id="COG1044">
    <property type="taxonomic scope" value="Bacteria"/>
</dbReference>
<dbReference type="HOGENOM" id="CLU_049865_0_1_6"/>
<dbReference type="OrthoDB" id="9784739at2"/>
<dbReference type="UniPathway" id="UPA00973"/>
<dbReference type="Proteomes" id="UP000009073">
    <property type="component" value="Chromosome"/>
</dbReference>
<dbReference type="GO" id="GO:0016020">
    <property type="term" value="C:membrane"/>
    <property type="evidence" value="ECO:0007669"/>
    <property type="project" value="GOC"/>
</dbReference>
<dbReference type="GO" id="GO:0016410">
    <property type="term" value="F:N-acyltransferase activity"/>
    <property type="evidence" value="ECO:0007669"/>
    <property type="project" value="InterPro"/>
</dbReference>
<dbReference type="GO" id="GO:0009245">
    <property type="term" value="P:lipid A biosynthetic process"/>
    <property type="evidence" value="ECO:0007669"/>
    <property type="project" value="UniProtKB-UniRule"/>
</dbReference>
<dbReference type="CDD" id="cd03352">
    <property type="entry name" value="LbH_LpxD"/>
    <property type="match status" value="1"/>
</dbReference>
<dbReference type="FunFam" id="2.160.10.10:FF:000005">
    <property type="entry name" value="UDP-3-O-(3-hydroxymyristoyl)glucosamine N-acyltransferase"/>
    <property type="match status" value="1"/>
</dbReference>
<dbReference type="Gene3D" id="1.20.5.170">
    <property type="match status" value="1"/>
</dbReference>
<dbReference type="Gene3D" id="2.160.10.10">
    <property type="entry name" value="Hexapeptide repeat proteins"/>
    <property type="match status" value="1"/>
</dbReference>
<dbReference type="Gene3D" id="3.40.1390.10">
    <property type="entry name" value="MurE/MurF, N-terminal domain"/>
    <property type="match status" value="1"/>
</dbReference>
<dbReference type="HAMAP" id="MF_00523">
    <property type="entry name" value="LpxD"/>
    <property type="match status" value="1"/>
</dbReference>
<dbReference type="InterPro" id="IPR001451">
    <property type="entry name" value="Hexapep"/>
</dbReference>
<dbReference type="InterPro" id="IPR007691">
    <property type="entry name" value="LpxD"/>
</dbReference>
<dbReference type="InterPro" id="IPR011004">
    <property type="entry name" value="Trimer_LpxA-like_sf"/>
</dbReference>
<dbReference type="InterPro" id="IPR020573">
    <property type="entry name" value="UDP_GlcNAc_AcTrfase_non-rep"/>
</dbReference>
<dbReference type="NCBIfam" id="TIGR01853">
    <property type="entry name" value="lipid_A_lpxD"/>
    <property type="match status" value="1"/>
</dbReference>
<dbReference type="NCBIfam" id="NF002060">
    <property type="entry name" value="PRK00892.1"/>
    <property type="match status" value="1"/>
</dbReference>
<dbReference type="PANTHER" id="PTHR43378">
    <property type="entry name" value="UDP-3-O-ACYLGLUCOSAMINE N-ACYLTRANSFERASE"/>
    <property type="match status" value="1"/>
</dbReference>
<dbReference type="PANTHER" id="PTHR43378:SF2">
    <property type="entry name" value="UDP-3-O-ACYLGLUCOSAMINE N-ACYLTRANSFERASE 1, MITOCHONDRIAL-RELATED"/>
    <property type="match status" value="1"/>
</dbReference>
<dbReference type="Pfam" id="PF00132">
    <property type="entry name" value="Hexapep"/>
    <property type="match status" value="2"/>
</dbReference>
<dbReference type="Pfam" id="PF04613">
    <property type="entry name" value="LpxD"/>
    <property type="match status" value="1"/>
</dbReference>
<dbReference type="SUPFAM" id="SSF51161">
    <property type="entry name" value="Trimeric LpxA-like enzymes"/>
    <property type="match status" value="1"/>
</dbReference>
<dbReference type="PROSITE" id="PS00101">
    <property type="entry name" value="HEXAPEP_TRANSFERASES"/>
    <property type="match status" value="1"/>
</dbReference>
<keyword id="KW-0012">Acyltransferase</keyword>
<keyword id="KW-0441">Lipid A biosynthesis</keyword>
<keyword id="KW-0444">Lipid biosynthesis</keyword>
<keyword id="KW-0443">Lipid metabolism</keyword>
<keyword id="KW-1185">Reference proteome</keyword>
<keyword id="KW-0677">Repeat</keyword>
<keyword id="KW-0808">Transferase</keyword>
<accession>C4L854</accession>
<gene>
    <name evidence="1" type="primary">lpxD</name>
    <name type="ordered locus">Tola_2101</name>
</gene>
<protein>
    <recommendedName>
        <fullName evidence="1">UDP-3-O-acylglucosamine N-acyltransferase</fullName>
        <ecNumber evidence="1">2.3.1.191</ecNumber>
    </recommendedName>
</protein>